<evidence type="ECO:0000255" key="1"/>
<proteinExistence type="predicted"/>
<keyword id="KW-0325">Glycoprotein</keyword>
<keyword id="KW-0588">Pheromone</keyword>
<keyword id="KW-0732">Signal</keyword>
<dbReference type="EMBL" id="Y00385">
    <property type="protein sequence ID" value="CAA68455.1"/>
    <property type="molecule type" value="Genomic_DNA"/>
</dbReference>
<dbReference type="PIR" id="A29120">
    <property type="entry name" value="A29120"/>
</dbReference>
<dbReference type="GO" id="GO:0005576">
    <property type="term" value="C:extracellular region"/>
    <property type="evidence" value="ECO:0007669"/>
    <property type="project" value="InterPro"/>
</dbReference>
<dbReference type="GO" id="GO:0000772">
    <property type="term" value="F:mating pheromone activity"/>
    <property type="evidence" value="ECO:0007669"/>
    <property type="project" value="InterPro"/>
</dbReference>
<dbReference type="GO" id="GO:0007618">
    <property type="term" value="P:mating"/>
    <property type="evidence" value="ECO:0007669"/>
    <property type="project" value="InterPro"/>
</dbReference>
<dbReference type="GO" id="GO:0000750">
    <property type="term" value="P:pheromone-dependent signal transduction involved in conjugation with cellular fusion"/>
    <property type="evidence" value="ECO:0007669"/>
    <property type="project" value="InterPro"/>
</dbReference>
<dbReference type="InterPro" id="IPR016326">
    <property type="entry name" value="Mating_factor_a"/>
</dbReference>
<dbReference type="InterPro" id="IPR006742">
    <property type="entry name" value="Mating_factor_alpha_C"/>
</dbReference>
<dbReference type="InterPro" id="IPR008675">
    <property type="entry name" value="Mating_factor_alpha_N"/>
</dbReference>
<dbReference type="Pfam" id="PF04648">
    <property type="entry name" value="MF_alpha"/>
    <property type="match status" value="2"/>
</dbReference>
<dbReference type="Pfam" id="PF05436">
    <property type="entry name" value="MF_alpha_N"/>
    <property type="match status" value="1"/>
</dbReference>
<dbReference type="PIRSF" id="PIRSF001866">
    <property type="entry name" value="Mating_factor_alpha"/>
    <property type="match status" value="1"/>
</dbReference>
<reference key="1">
    <citation type="journal article" date="1987" name="Nucleic Acids Res.">
        <title>Nucleotide sequence of the gene encoding the Saccharomyces kluyveri alpha mating pheromone.</title>
        <authorList>
            <person name="Egel-Mitani M."/>
            <person name="Hansen M.T."/>
        </authorList>
    </citation>
    <scope>NUCLEOTIDE SEQUENCE [GENOMIC DNA]</scope>
    <source>
        <strain>NBRC 1894 / Ks-133(-)</strain>
    </source>
</reference>
<sequence length="125" mass="13925">MKLFTTLSASLIFIHSLGSTRAAPVTGDESSVEIPEESLIGFLDLAGDDISVFPVSNETHYGLMLVNSTIVNLARSESANFKGKREADAEPWHWLSFSKGEPMYKREADAEPWHWLSFSKGEPMY</sequence>
<protein>
    <recommendedName>
        <fullName>Mating factor alpha</fullName>
    </recommendedName>
    <alternativeName>
        <fullName>Alpha mating pheromone</fullName>
    </alternativeName>
    <component>
        <recommendedName>
            <fullName>Alpha-mating pheromone</fullName>
        </recommendedName>
    </component>
    <component>
        <recommendedName>
            <fullName>Mating factor alpha</fullName>
        </recommendedName>
    </component>
</protein>
<feature type="signal peptide">
    <location>
        <begin position="1"/>
        <end position="22"/>
    </location>
</feature>
<feature type="chain" id="PRO_0000021704" description="Alpha-mating pheromone">
    <location>
        <begin position="23"/>
        <end position="125"/>
    </location>
</feature>
<feature type="peptide" id="PRO_0000021705" description="Mating factor alpha">
    <location>
        <begin position="92"/>
        <end position="104"/>
    </location>
</feature>
<feature type="peptide" id="PRO_0000021706" description="Mating factor alpha">
    <location>
        <begin position="113"/>
        <end position="125"/>
    </location>
</feature>
<feature type="glycosylation site" description="N-linked (GlcNAc...) asparagine" evidence="1">
    <location>
        <position position="57"/>
    </location>
</feature>
<feature type="glycosylation site" description="N-linked (GlcNAc...) asparagine" evidence="1">
    <location>
        <position position="67"/>
    </location>
</feature>
<organism>
    <name type="scientific">Lachancea kluyveri</name>
    <name type="common">Yeast</name>
    <name type="synonym">Saccharomyces kluyveri</name>
    <dbReference type="NCBI Taxonomy" id="4934"/>
    <lineage>
        <taxon>Eukaryota</taxon>
        <taxon>Fungi</taxon>
        <taxon>Dikarya</taxon>
        <taxon>Ascomycota</taxon>
        <taxon>Saccharomycotina</taxon>
        <taxon>Saccharomycetes</taxon>
        <taxon>Saccharomycetales</taxon>
        <taxon>Saccharomycetaceae</taxon>
        <taxon>Lachancea</taxon>
    </lineage>
</organism>
<accession>P06648</accession>
<name>MFAP_LACKL</name>